<proteinExistence type="predicted"/>
<dbReference type="EMBL" id="D12973">
    <property type="protein sequence ID" value="BAA02350.2"/>
    <property type="status" value="ALT_SEQ"/>
    <property type="molecule type" value="Genomic_DNA"/>
</dbReference>
<dbReference type="PIR" id="S36670">
    <property type="entry name" value="S36670"/>
</dbReference>
<dbReference type="SMR" id="Q04605"/>
<dbReference type="Gene3D" id="3.40.50.300">
    <property type="entry name" value="P-loop containing nucleotide triphosphate hydrolases"/>
    <property type="match status" value="1"/>
</dbReference>
<dbReference type="InterPro" id="IPR027417">
    <property type="entry name" value="P-loop_NTPase"/>
</dbReference>
<dbReference type="InterPro" id="IPR022488">
    <property type="entry name" value="PPK2-related"/>
</dbReference>
<dbReference type="PANTHER" id="PTHR34383:SF3">
    <property type="entry name" value="POLYPHOSPHATE:AMP PHOSPHOTRANSFERASE"/>
    <property type="match status" value="1"/>
</dbReference>
<dbReference type="PANTHER" id="PTHR34383">
    <property type="entry name" value="POLYPHOSPHATE:AMP PHOSPHOTRANSFERASE-RELATED"/>
    <property type="match status" value="1"/>
</dbReference>
<dbReference type="Pfam" id="PF03976">
    <property type="entry name" value="PPK2"/>
    <property type="match status" value="1"/>
</dbReference>
<dbReference type="SUPFAM" id="SSF52540">
    <property type="entry name" value="P-loop containing nucleoside triphosphate hydrolases"/>
    <property type="match status" value="1"/>
</dbReference>
<accession>Q04605</accession>
<sequence length="136" mass="16313">IWDKRFKQINHFEQYLVENGIVVLKFFLNVSKEQQKKRFLARINEPEKNWKFSVSDAKERQHWDQYMEAFEDVFNNTSTSYAPWYIIPADHKWFTRLAVSDIIVSTLKSLHLSYPTVSEVRRAELLEAKKVLESEE</sequence>
<protein>
    <recommendedName>
        <fullName>Uncharacterized protein in chlN 3'region</fullName>
    </recommendedName>
    <alternativeName>
        <fullName>URF2</fullName>
    </alternativeName>
</protein>
<feature type="chain" id="PRO_0000066544" description="Uncharacterized protein in chlN 3'region">
    <location>
        <begin position="1" status="less than"/>
        <end position="136"/>
    </location>
</feature>
<feature type="non-terminal residue">
    <location>
        <position position="1"/>
    </location>
</feature>
<reference key="1">
    <citation type="journal article" date="1993" name="Plant Cell Physiol.">
        <title>Identification of a nifDK-like gene (ORF467) involved in the biosynthesis of chlorophyll in the cyanobacterium Plectonema boryanum.</title>
        <authorList>
            <person name="Fujita Y."/>
            <person name="Matsumoto H."/>
            <person name="Takahashi Y."/>
            <person name="Matsubara H."/>
        </authorList>
    </citation>
    <scope>NUCLEOTIDE SEQUENCE [GENOMIC DNA]</scope>
    <source>
        <strain>ATCC 27894 / CCAP 1463/1 / IAM M-101 / PCC 6306 / UTEX 581</strain>
    </source>
</reference>
<organism>
    <name type="scientific">Leptolyngbya boryana</name>
    <name type="common">Plectonema boryanum</name>
    <dbReference type="NCBI Taxonomy" id="1184"/>
    <lineage>
        <taxon>Bacteria</taxon>
        <taxon>Bacillati</taxon>
        <taxon>Cyanobacteriota</taxon>
        <taxon>Cyanophyceae</taxon>
        <taxon>Leptolyngbyales</taxon>
        <taxon>Leptolyngbyaceae</taxon>
        <taxon>Leptolyngbya group</taxon>
        <taxon>Leptolyngbya</taxon>
    </lineage>
</organism>
<name>YUF2_LEPBY</name>